<comment type="function">
    <text evidence="1">Catalyzes the deamination of 5-methylthioadenosine and S-adenosyl-L-homocysteine into 5-methylthioinosine and S-inosyl-L-homocysteine, respectively. Is also able to deaminate adenosine.</text>
</comment>
<comment type="catalytic activity">
    <reaction evidence="1">
        <text>S-adenosyl-L-homocysteine + H2O + H(+) = S-inosyl-L-homocysteine + NH4(+)</text>
        <dbReference type="Rhea" id="RHEA:20716"/>
        <dbReference type="ChEBI" id="CHEBI:15377"/>
        <dbReference type="ChEBI" id="CHEBI:15378"/>
        <dbReference type="ChEBI" id="CHEBI:28938"/>
        <dbReference type="ChEBI" id="CHEBI:57856"/>
        <dbReference type="ChEBI" id="CHEBI:57985"/>
        <dbReference type="EC" id="3.5.4.28"/>
    </reaction>
</comment>
<comment type="catalytic activity">
    <reaction evidence="1">
        <text>S-methyl-5'-thioadenosine + H2O + H(+) = S-methyl-5'-thioinosine + NH4(+)</text>
        <dbReference type="Rhea" id="RHEA:25025"/>
        <dbReference type="ChEBI" id="CHEBI:15377"/>
        <dbReference type="ChEBI" id="CHEBI:15378"/>
        <dbReference type="ChEBI" id="CHEBI:17509"/>
        <dbReference type="ChEBI" id="CHEBI:28938"/>
        <dbReference type="ChEBI" id="CHEBI:48595"/>
        <dbReference type="EC" id="3.5.4.31"/>
    </reaction>
</comment>
<comment type="cofactor">
    <cofactor evidence="1">
        <name>Zn(2+)</name>
        <dbReference type="ChEBI" id="CHEBI:29105"/>
    </cofactor>
    <text evidence="1">Binds 1 zinc ion per subunit.</text>
</comment>
<comment type="similarity">
    <text evidence="1">Belongs to the metallo-dependent hydrolases superfamily. MTA/SAH deaminase family.</text>
</comment>
<gene>
    <name evidence="1" type="primary">mtaD</name>
    <name type="ordered locus">Moth_0963</name>
</gene>
<proteinExistence type="inferred from homology"/>
<organism>
    <name type="scientific">Moorella thermoacetica (strain ATCC 39073 / JCM 9320)</name>
    <dbReference type="NCBI Taxonomy" id="264732"/>
    <lineage>
        <taxon>Bacteria</taxon>
        <taxon>Bacillati</taxon>
        <taxon>Bacillota</taxon>
        <taxon>Clostridia</taxon>
        <taxon>Moorellales</taxon>
        <taxon>Moorellaceae</taxon>
        <taxon>Moorella</taxon>
    </lineage>
</organism>
<protein>
    <recommendedName>
        <fullName evidence="1">5-methylthioadenosine/S-adenosylhomocysteine deaminase</fullName>
        <shortName evidence="1">MTA/SAH deaminase</shortName>
        <ecNumber evidence="1">3.5.4.28</ecNumber>
        <ecNumber evidence="1">3.5.4.31</ecNumber>
    </recommendedName>
</protein>
<dbReference type="EC" id="3.5.4.28" evidence="1"/>
<dbReference type="EC" id="3.5.4.31" evidence="1"/>
<dbReference type="EMBL" id="CP000232">
    <property type="protein sequence ID" value="ABC19278.1"/>
    <property type="molecule type" value="Genomic_DNA"/>
</dbReference>
<dbReference type="RefSeq" id="YP_429821.1">
    <property type="nucleotide sequence ID" value="NC_007644.1"/>
</dbReference>
<dbReference type="SMR" id="Q2RJW1"/>
<dbReference type="STRING" id="264732.Moth_0963"/>
<dbReference type="EnsemblBacteria" id="ABC19278">
    <property type="protein sequence ID" value="ABC19278"/>
    <property type="gene ID" value="Moth_0963"/>
</dbReference>
<dbReference type="KEGG" id="mta:Moth_0963"/>
<dbReference type="PATRIC" id="fig|264732.11.peg.1036"/>
<dbReference type="eggNOG" id="COG0402">
    <property type="taxonomic scope" value="Bacteria"/>
</dbReference>
<dbReference type="HOGENOM" id="CLU_012358_2_1_9"/>
<dbReference type="OrthoDB" id="9807210at2"/>
<dbReference type="GO" id="GO:0090614">
    <property type="term" value="F:5'-methylthioadenosine deaminase activity"/>
    <property type="evidence" value="ECO:0007669"/>
    <property type="project" value="UniProtKB-UniRule"/>
</dbReference>
<dbReference type="GO" id="GO:0046872">
    <property type="term" value="F:metal ion binding"/>
    <property type="evidence" value="ECO:0007669"/>
    <property type="project" value="UniProtKB-KW"/>
</dbReference>
<dbReference type="GO" id="GO:0050270">
    <property type="term" value="F:S-adenosylhomocysteine deaminase activity"/>
    <property type="evidence" value="ECO:0007669"/>
    <property type="project" value="UniProtKB-UniRule"/>
</dbReference>
<dbReference type="CDD" id="cd01298">
    <property type="entry name" value="ATZ_TRZ_like"/>
    <property type="match status" value="1"/>
</dbReference>
<dbReference type="FunFam" id="3.20.20.140:FF:000014">
    <property type="entry name" value="5-methylthioadenosine/S-adenosylhomocysteine deaminase"/>
    <property type="match status" value="1"/>
</dbReference>
<dbReference type="Gene3D" id="3.20.20.140">
    <property type="entry name" value="Metal-dependent hydrolases"/>
    <property type="match status" value="1"/>
</dbReference>
<dbReference type="Gene3D" id="2.30.40.10">
    <property type="entry name" value="Urease, subunit C, domain 1"/>
    <property type="match status" value="1"/>
</dbReference>
<dbReference type="HAMAP" id="MF_01281">
    <property type="entry name" value="MTA_SAH_deamin"/>
    <property type="match status" value="1"/>
</dbReference>
<dbReference type="InterPro" id="IPR006680">
    <property type="entry name" value="Amidohydro-rel"/>
</dbReference>
<dbReference type="InterPro" id="IPR023512">
    <property type="entry name" value="Deaminase_MtaD/DadD"/>
</dbReference>
<dbReference type="InterPro" id="IPR011059">
    <property type="entry name" value="Metal-dep_hydrolase_composite"/>
</dbReference>
<dbReference type="InterPro" id="IPR032466">
    <property type="entry name" value="Metal_Hydrolase"/>
</dbReference>
<dbReference type="InterPro" id="IPR050287">
    <property type="entry name" value="MTA/SAH_deaminase"/>
</dbReference>
<dbReference type="PANTHER" id="PTHR43794:SF11">
    <property type="entry name" value="AMIDOHYDROLASE-RELATED DOMAIN-CONTAINING PROTEIN"/>
    <property type="match status" value="1"/>
</dbReference>
<dbReference type="PANTHER" id="PTHR43794">
    <property type="entry name" value="AMINOHYDROLASE SSNA-RELATED"/>
    <property type="match status" value="1"/>
</dbReference>
<dbReference type="Pfam" id="PF01979">
    <property type="entry name" value="Amidohydro_1"/>
    <property type="match status" value="1"/>
</dbReference>
<dbReference type="SUPFAM" id="SSF51338">
    <property type="entry name" value="Composite domain of metallo-dependent hydrolases"/>
    <property type="match status" value="1"/>
</dbReference>
<dbReference type="SUPFAM" id="SSF51556">
    <property type="entry name" value="Metallo-dependent hydrolases"/>
    <property type="match status" value="1"/>
</dbReference>
<sequence length="428" mass="45410">MGKILIKDCTIVPISGPVIGKGVIAINDDRLHYVGPAGGLPAGWQADTVIDAGDMVALPGLVNAHTHAAMTLLRSYADDLPLKQWLEEKIWPREDRLEREDIYWGSKIALLEMIRSGTTTFADMYFHMDAVAGAVVEAGLRASLCQGLIGLQDTSNKRLEAGISMVKEWHGAGEGRITTMLGPHAPNTCTPEYLTRVAETAAGLGVGLHIHLAETRGEVEDVKARYGATPVALVNKLGLLDLPVLAAHCVHLTTEEIAILAEKKVGVAHCPESNLKLASGVAPVKEMLAAGVNVAIGTDGASSNNNLDMVAETRTAALLAKGITGDPTVVPAHQALVMATLNGARALGLEKEIGTLEAGKKADLILVDMRQPHLMPPNDVEANLVYAARGSDVDTVIVNGKILMARGEVKTLDAEEIYAQVTKRMHKG</sequence>
<reference key="1">
    <citation type="journal article" date="2008" name="Environ. Microbiol.">
        <title>The complete genome sequence of Moorella thermoacetica (f. Clostridium thermoaceticum).</title>
        <authorList>
            <person name="Pierce E."/>
            <person name="Xie G."/>
            <person name="Barabote R.D."/>
            <person name="Saunders E."/>
            <person name="Han C.S."/>
            <person name="Detter J.C."/>
            <person name="Richardson P."/>
            <person name="Brettin T.S."/>
            <person name="Das A."/>
            <person name="Ljungdahl L.G."/>
            <person name="Ragsdale S.W."/>
        </authorList>
    </citation>
    <scope>NUCLEOTIDE SEQUENCE [LARGE SCALE GENOMIC DNA]</scope>
    <source>
        <strain>ATCC 39073 / JCM 9320</strain>
    </source>
</reference>
<feature type="chain" id="PRO_0000312457" description="5-methylthioadenosine/S-adenosylhomocysteine deaminase">
    <location>
        <begin position="1"/>
        <end position="428"/>
    </location>
</feature>
<feature type="binding site" evidence="1">
    <location>
        <position position="65"/>
    </location>
    <ligand>
        <name>Zn(2+)</name>
        <dbReference type="ChEBI" id="CHEBI:29105"/>
    </ligand>
</feature>
<feature type="binding site" evidence="1">
    <location>
        <position position="67"/>
    </location>
    <ligand>
        <name>Zn(2+)</name>
        <dbReference type="ChEBI" id="CHEBI:29105"/>
    </ligand>
</feature>
<feature type="binding site" evidence="1">
    <location>
        <position position="94"/>
    </location>
    <ligand>
        <name>substrate</name>
    </ligand>
</feature>
<feature type="binding site" evidence="1">
    <location>
        <position position="158"/>
    </location>
    <ligand>
        <name>substrate</name>
    </ligand>
</feature>
<feature type="binding site" evidence="1">
    <location>
        <position position="184"/>
    </location>
    <ligand>
        <name>substrate</name>
    </ligand>
</feature>
<feature type="binding site" evidence="1">
    <location>
        <position position="211"/>
    </location>
    <ligand>
        <name>Zn(2+)</name>
        <dbReference type="ChEBI" id="CHEBI:29105"/>
    </ligand>
</feature>
<feature type="binding site" evidence="1">
    <location>
        <position position="214"/>
    </location>
    <ligand>
        <name>substrate</name>
    </ligand>
</feature>
<feature type="binding site" evidence="1">
    <location>
        <position position="299"/>
    </location>
    <ligand>
        <name>substrate</name>
    </ligand>
</feature>
<feature type="binding site" evidence="1">
    <location>
        <position position="299"/>
    </location>
    <ligand>
        <name>Zn(2+)</name>
        <dbReference type="ChEBI" id="CHEBI:29105"/>
    </ligand>
</feature>
<name>MTAD_MOOTA</name>
<keyword id="KW-0378">Hydrolase</keyword>
<keyword id="KW-0479">Metal-binding</keyword>
<keyword id="KW-0862">Zinc</keyword>
<evidence type="ECO:0000255" key="1">
    <source>
        <dbReference type="HAMAP-Rule" id="MF_01281"/>
    </source>
</evidence>
<accession>Q2RJW1</accession>